<evidence type="ECO:0000255" key="1">
    <source>
        <dbReference type="HAMAP-Rule" id="MF_00110"/>
    </source>
</evidence>
<name>AROB_FRATO</name>
<sequence>MISKLSVNPTFSPSYNIIVDSVLDFSHILEYVTNKQVLVVTNTTVAKLYLTKFLAALVDDLDVRTCILEDGEQYKSQQSLDKILSTLLENHFTRNSTVLVALGGGVIGDITGFAAAIYQRGIDFIQIPTTLLSQVDSSVGGKTAINHQLGKNMIGAFYQPKVVYTSIEFYKTLLQREYIAGMAEVVKYAFISKDFYLWLDSNRDKILAKDSVTLIEMVKRSCQIKAQVVAMDEKELTGARAILNFGHTFGHAIEKCQNYRGLKHGEAVGVGMAQAIDFSHYLGLISQQQAKDFKDFIVSFGISIDFPNDICQKEFLEAMLLDKKNSNKELKFILIENIGSLSLQKQSKNELEQFLDISR</sequence>
<dbReference type="EC" id="4.2.3.4" evidence="1"/>
<dbReference type="EMBL" id="CP000437">
    <property type="protein sequence ID" value="ABI82730.1"/>
    <property type="molecule type" value="Genomic_DNA"/>
</dbReference>
<dbReference type="RefSeq" id="WP_011648629.1">
    <property type="nucleotide sequence ID" value="NC_017463.1"/>
</dbReference>
<dbReference type="SMR" id="Q0BMF4"/>
<dbReference type="KEGG" id="fth:FTH_0795"/>
<dbReference type="UniPathway" id="UPA00053">
    <property type="reaction ID" value="UER00085"/>
</dbReference>
<dbReference type="GO" id="GO:0005737">
    <property type="term" value="C:cytoplasm"/>
    <property type="evidence" value="ECO:0007669"/>
    <property type="project" value="UniProtKB-SubCell"/>
</dbReference>
<dbReference type="GO" id="GO:0003856">
    <property type="term" value="F:3-dehydroquinate synthase activity"/>
    <property type="evidence" value="ECO:0007669"/>
    <property type="project" value="UniProtKB-UniRule"/>
</dbReference>
<dbReference type="GO" id="GO:0046872">
    <property type="term" value="F:metal ion binding"/>
    <property type="evidence" value="ECO:0007669"/>
    <property type="project" value="UniProtKB-KW"/>
</dbReference>
<dbReference type="GO" id="GO:0000166">
    <property type="term" value="F:nucleotide binding"/>
    <property type="evidence" value="ECO:0007669"/>
    <property type="project" value="UniProtKB-KW"/>
</dbReference>
<dbReference type="GO" id="GO:0008652">
    <property type="term" value="P:amino acid biosynthetic process"/>
    <property type="evidence" value="ECO:0007669"/>
    <property type="project" value="UniProtKB-KW"/>
</dbReference>
<dbReference type="GO" id="GO:0009073">
    <property type="term" value="P:aromatic amino acid family biosynthetic process"/>
    <property type="evidence" value="ECO:0007669"/>
    <property type="project" value="UniProtKB-KW"/>
</dbReference>
<dbReference type="GO" id="GO:0009423">
    <property type="term" value="P:chorismate biosynthetic process"/>
    <property type="evidence" value="ECO:0007669"/>
    <property type="project" value="UniProtKB-UniRule"/>
</dbReference>
<dbReference type="CDD" id="cd08195">
    <property type="entry name" value="DHQS"/>
    <property type="match status" value="1"/>
</dbReference>
<dbReference type="FunFam" id="3.40.50.1970:FF:000001">
    <property type="entry name" value="3-dehydroquinate synthase"/>
    <property type="match status" value="1"/>
</dbReference>
<dbReference type="Gene3D" id="3.40.50.1970">
    <property type="match status" value="1"/>
</dbReference>
<dbReference type="Gene3D" id="1.20.1090.10">
    <property type="entry name" value="Dehydroquinate synthase-like - alpha domain"/>
    <property type="match status" value="1"/>
</dbReference>
<dbReference type="HAMAP" id="MF_00110">
    <property type="entry name" value="DHQ_synthase"/>
    <property type="match status" value="1"/>
</dbReference>
<dbReference type="InterPro" id="IPR050071">
    <property type="entry name" value="Dehydroquinate_synthase"/>
</dbReference>
<dbReference type="InterPro" id="IPR016037">
    <property type="entry name" value="DHQ_synth_AroB"/>
</dbReference>
<dbReference type="InterPro" id="IPR030963">
    <property type="entry name" value="DHQ_synth_fam"/>
</dbReference>
<dbReference type="InterPro" id="IPR030960">
    <property type="entry name" value="DHQS/DOIS_N"/>
</dbReference>
<dbReference type="InterPro" id="IPR056179">
    <property type="entry name" value="DHQS_C"/>
</dbReference>
<dbReference type="NCBIfam" id="TIGR01357">
    <property type="entry name" value="aroB"/>
    <property type="match status" value="1"/>
</dbReference>
<dbReference type="PANTHER" id="PTHR43622">
    <property type="entry name" value="3-DEHYDROQUINATE SYNTHASE"/>
    <property type="match status" value="1"/>
</dbReference>
<dbReference type="PANTHER" id="PTHR43622:SF7">
    <property type="entry name" value="3-DEHYDROQUINATE SYNTHASE, CHLOROPLASTIC"/>
    <property type="match status" value="1"/>
</dbReference>
<dbReference type="Pfam" id="PF01761">
    <property type="entry name" value="DHQ_synthase"/>
    <property type="match status" value="1"/>
</dbReference>
<dbReference type="Pfam" id="PF24621">
    <property type="entry name" value="DHQS_C"/>
    <property type="match status" value="1"/>
</dbReference>
<dbReference type="PIRSF" id="PIRSF001455">
    <property type="entry name" value="DHQ_synth"/>
    <property type="match status" value="1"/>
</dbReference>
<dbReference type="SUPFAM" id="SSF56796">
    <property type="entry name" value="Dehydroquinate synthase-like"/>
    <property type="match status" value="1"/>
</dbReference>
<gene>
    <name evidence="1" type="primary">aroB</name>
    <name type="ordered locus">FTH_0795</name>
</gene>
<comment type="function">
    <text evidence="1">Catalyzes the conversion of 3-deoxy-D-arabino-heptulosonate 7-phosphate (DAHP) to dehydroquinate (DHQ).</text>
</comment>
<comment type="catalytic activity">
    <reaction evidence="1">
        <text>7-phospho-2-dehydro-3-deoxy-D-arabino-heptonate = 3-dehydroquinate + phosphate</text>
        <dbReference type="Rhea" id="RHEA:21968"/>
        <dbReference type="ChEBI" id="CHEBI:32364"/>
        <dbReference type="ChEBI" id="CHEBI:43474"/>
        <dbReference type="ChEBI" id="CHEBI:58394"/>
        <dbReference type="EC" id="4.2.3.4"/>
    </reaction>
</comment>
<comment type="cofactor">
    <cofactor evidence="1">
        <name>Co(2+)</name>
        <dbReference type="ChEBI" id="CHEBI:48828"/>
    </cofactor>
    <cofactor evidence="1">
        <name>Zn(2+)</name>
        <dbReference type="ChEBI" id="CHEBI:29105"/>
    </cofactor>
    <text evidence="1">Binds 1 divalent metal cation per subunit. Can use either Co(2+) or Zn(2+).</text>
</comment>
<comment type="cofactor">
    <cofactor evidence="1">
        <name>NAD(+)</name>
        <dbReference type="ChEBI" id="CHEBI:57540"/>
    </cofactor>
</comment>
<comment type="pathway">
    <text evidence="1">Metabolic intermediate biosynthesis; chorismate biosynthesis; chorismate from D-erythrose 4-phosphate and phosphoenolpyruvate: step 2/7.</text>
</comment>
<comment type="subcellular location">
    <subcellularLocation>
        <location evidence="1">Cytoplasm</location>
    </subcellularLocation>
</comment>
<comment type="similarity">
    <text evidence="1">Belongs to the sugar phosphate cyclases superfamily. Dehydroquinate synthase family.</text>
</comment>
<feature type="chain" id="PRO_1000094522" description="3-dehydroquinate synthase">
    <location>
        <begin position="1"/>
        <end position="359"/>
    </location>
</feature>
<feature type="binding site" evidence="1">
    <location>
        <begin position="70"/>
        <end position="75"/>
    </location>
    <ligand>
        <name>NAD(+)</name>
        <dbReference type="ChEBI" id="CHEBI:57540"/>
    </ligand>
</feature>
<feature type="binding site" evidence="1">
    <location>
        <begin position="105"/>
        <end position="109"/>
    </location>
    <ligand>
        <name>NAD(+)</name>
        <dbReference type="ChEBI" id="CHEBI:57540"/>
    </ligand>
</feature>
<feature type="binding site" evidence="1">
    <location>
        <begin position="129"/>
        <end position="130"/>
    </location>
    <ligand>
        <name>NAD(+)</name>
        <dbReference type="ChEBI" id="CHEBI:57540"/>
    </ligand>
</feature>
<feature type="binding site" evidence="1">
    <location>
        <position position="142"/>
    </location>
    <ligand>
        <name>NAD(+)</name>
        <dbReference type="ChEBI" id="CHEBI:57540"/>
    </ligand>
</feature>
<feature type="binding site" evidence="1">
    <location>
        <position position="151"/>
    </location>
    <ligand>
        <name>NAD(+)</name>
        <dbReference type="ChEBI" id="CHEBI:57540"/>
    </ligand>
</feature>
<feature type="binding site" evidence="1">
    <location>
        <begin position="169"/>
        <end position="172"/>
    </location>
    <ligand>
        <name>NAD(+)</name>
        <dbReference type="ChEBI" id="CHEBI:57540"/>
    </ligand>
</feature>
<feature type="binding site" evidence="1">
    <location>
        <position position="184"/>
    </location>
    <ligand>
        <name>Zn(2+)</name>
        <dbReference type="ChEBI" id="CHEBI:29105"/>
    </ligand>
</feature>
<feature type="binding site" evidence="1">
    <location>
        <position position="247"/>
    </location>
    <ligand>
        <name>Zn(2+)</name>
        <dbReference type="ChEBI" id="CHEBI:29105"/>
    </ligand>
</feature>
<feature type="binding site" evidence="1">
    <location>
        <position position="264"/>
    </location>
    <ligand>
        <name>Zn(2+)</name>
        <dbReference type="ChEBI" id="CHEBI:29105"/>
    </ligand>
</feature>
<reference key="1">
    <citation type="journal article" date="2006" name="J. Bacteriol.">
        <title>Chromosome rearrangement and diversification of Francisella tularensis revealed by the type B (OSU18) genome sequence.</title>
        <authorList>
            <person name="Petrosino J.F."/>
            <person name="Xiang Q."/>
            <person name="Karpathy S.E."/>
            <person name="Jiang H."/>
            <person name="Yerrapragada S."/>
            <person name="Liu Y."/>
            <person name="Gioia J."/>
            <person name="Hemphill L."/>
            <person name="Gonzalez A."/>
            <person name="Raghavan T.M."/>
            <person name="Uzman A."/>
            <person name="Fox G.E."/>
            <person name="Highlander S."/>
            <person name="Reichard M."/>
            <person name="Morton R.J."/>
            <person name="Clinkenbeard K.D."/>
            <person name="Weinstock G.M."/>
        </authorList>
    </citation>
    <scope>NUCLEOTIDE SEQUENCE [LARGE SCALE GENOMIC DNA]</scope>
    <source>
        <strain>OSU18</strain>
    </source>
</reference>
<keyword id="KW-0028">Amino-acid biosynthesis</keyword>
<keyword id="KW-0057">Aromatic amino acid biosynthesis</keyword>
<keyword id="KW-0170">Cobalt</keyword>
<keyword id="KW-0963">Cytoplasm</keyword>
<keyword id="KW-0456">Lyase</keyword>
<keyword id="KW-0479">Metal-binding</keyword>
<keyword id="KW-0520">NAD</keyword>
<keyword id="KW-0547">Nucleotide-binding</keyword>
<keyword id="KW-0862">Zinc</keyword>
<protein>
    <recommendedName>
        <fullName evidence="1">3-dehydroquinate synthase</fullName>
        <shortName evidence="1">DHQS</shortName>
        <ecNumber evidence="1">4.2.3.4</ecNumber>
    </recommendedName>
</protein>
<organism>
    <name type="scientific">Francisella tularensis subsp. holarctica (strain OSU18)</name>
    <dbReference type="NCBI Taxonomy" id="393011"/>
    <lineage>
        <taxon>Bacteria</taxon>
        <taxon>Pseudomonadati</taxon>
        <taxon>Pseudomonadota</taxon>
        <taxon>Gammaproteobacteria</taxon>
        <taxon>Thiotrichales</taxon>
        <taxon>Francisellaceae</taxon>
        <taxon>Francisella</taxon>
    </lineage>
</organism>
<accession>Q0BMF4</accession>
<proteinExistence type="inferred from homology"/>